<feature type="chain" id="PRO_1000203506" description="4-hydroxy-3-methylbut-2-en-1-yl diphosphate synthase (flavodoxin)">
    <location>
        <begin position="1"/>
        <end position="370"/>
    </location>
</feature>
<feature type="binding site" evidence="1">
    <location>
        <position position="270"/>
    </location>
    <ligand>
        <name>[4Fe-4S] cluster</name>
        <dbReference type="ChEBI" id="CHEBI:49883"/>
    </ligand>
</feature>
<feature type="binding site" evidence="1">
    <location>
        <position position="273"/>
    </location>
    <ligand>
        <name>[4Fe-4S] cluster</name>
        <dbReference type="ChEBI" id="CHEBI:49883"/>
    </ligand>
</feature>
<feature type="binding site" evidence="1">
    <location>
        <position position="305"/>
    </location>
    <ligand>
        <name>[4Fe-4S] cluster</name>
        <dbReference type="ChEBI" id="CHEBI:49883"/>
    </ligand>
</feature>
<feature type="binding site" evidence="1">
    <location>
        <position position="312"/>
    </location>
    <ligand>
        <name>[4Fe-4S] cluster</name>
        <dbReference type="ChEBI" id="CHEBI:49883"/>
    </ligand>
</feature>
<organism>
    <name type="scientific">Hamiltonella defensa subsp. Acyrthosiphon pisum (strain 5AT)</name>
    <dbReference type="NCBI Taxonomy" id="572265"/>
    <lineage>
        <taxon>Bacteria</taxon>
        <taxon>Pseudomonadati</taxon>
        <taxon>Pseudomonadota</taxon>
        <taxon>Gammaproteobacteria</taxon>
        <taxon>Enterobacterales</taxon>
        <taxon>Enterobacteriaceae</taxon>
        <taxon>aphid secondary symbionts</taxon>
        <taxon>Candidatus Hamiltonella</taxon>
    </lineage>
</organism>
<gene>
    <name evidence="1" type="primary">ispG</name>
    <name type="ordered locus">HDEF_0752</name>
</gene>
<name>ISPG_HAMD5</name>
<reference key="1">
    <citation type="journal article" date="2009" name="Proc. Natl. Acad. Sci. U.S.A.">
        <title>Hamiltonella defensa, genome evolution of protective bacterial endosymbiont from pathogenic ancestors.</title>
        <authorList>
            <person name="Degnan P.H."/>
            <person name="Yu Y."/>
            <person name="Sisneros N."/>
            <person name="Wing R.A."/>
            <person name="Moran N.A."/>
        </authorList>
    </citation>
    <scope>NUCLEOTIDE SEQUENCE [LARGE SCALE GENOMIC DNA]</scope>
    <source>
        <strain>5AT</strain>
    </source>
</reference>
<dbReference type="EC" id="1.17.7.3" evidence="1"/>
<dbReference type="EMBL" id="CP001277">
    <property type="protein sequence ID" value="ACQ67481.1"/>
    <property type="molecule type" value="Genomic_DNA"/>
</dbReference>
<dbReference type="RefSeq" id="WP_015873301.1">
    <property type="nucleotide sequence ID" value="NC_012751.1"/>
</dbReference>
<dbReference type="SMR" id="C4K4I8"/>
<dbReference type="STRING" id="572265.HDEF_0752"/>
<dbReference type="GeneID" id="66260600"/>
<dbReference type="KEGG" id="hde:HDEF_0752"/>
<dbReference type="eggNOG" id="COG0821">
    <property type="taxonomic scope" value="Bacteria"/>
</dbReference>
<dbReference type="HOGENOM" id="CLU_042258_0_0_6"/>
<dbReference type="UniPathway" id="UPA00056">
    <property type="reaction ID" value="UER00096"/>
</dbReference>
<dbReference type="Proteomes" id="UP000002334">
    <property type="component" value="Chromosome"/>
</dbReference>
<dbReference type="GO" id="GO:0051539">
    <property type="term" value="F:4 iron, 4 sulfur cluster binding"/>
    <property type="evidence" value="ECO:0007669"/>
    <property type="project" value="UniProtKB-UniRule"/>
</dbReference>
<dbReference type="GO" id="GO:0046429">
    <property type="term" value="F:4-hydroxy-3-methylbut-2-en-1-yl diphosphate synthase activity (ferredoxin)"/>
    <property type="evidence" value="ECO:0007669"/>
    <property type="project" value="UniProtKB-UniRule"/>
</dbReference>
<dbReference type="GO" id="GO:0141197">
    <property type="term" value="F:4-hydroxy-3-methylbut-2-enyl-diphosphate synthase activity (flavodoxin)"/>
    <property type="evidence" value="ECO:0007669"/>
    <property type="project" value="UniProtKB-EC"/>
</dbReference>
<dbReference type="GO" id="GO:0005506">
    <property type="term" value="F:iron ion binding"/>
    <property type="evidence" value="ECO:0007669"/>
    <property type="project" value="InterPro"/>
</dbReference>
<dbReference type="GO" id="GO:0019288">
    <property type="term" value="P:isopentenyl diphosphate biosynthetic process, methylerythritol 4-phosphate pathway"/>
    <property type="evidence" value="ECO:0007669"/>
    <property type="project" value="UniProtKB-UniRule"/>
</dbReference>
<dbReference type="GO" id="GO:0016114">
    <property type="term" value="P:terpenoid biosynthetic process"/>
    <property type="evidence" value="ECO:0007669"/>
    <property type="project" value="InterPro"/>
</dbReference>
<dbReference type="FunFam" id="3.20.20.20:FF:000001">
    <property type="entry name" value="4-hydroxy-3-methylbut-2-en-1-yl diphosphate synthase (flavodoxin)"/>
    <property type="match status" value="1"/>
</dbReference>
<dbReference type="FunFam" id="3.30.413.10:FF:000002">
    <property type="entry name" value="4-hydroxy-3-methylbut-2-en-1-yl diphosphate synthase (flavodoxin)"/>
    <property type="match status" value="1"/>
</dbReference>
<dbReference type="Gene3D" id="3.20.20.20">
    <property type="entry name" value="Dihydropteroate synthase-like"/>
    <property type="match status" value="1"/>
</dbReference>
<dbReference type="Gene3D" id="3.30.413.10">
    <property type="entry name" value="Sulfite Reductase Hemoprotein, domain 1"/>
    <property type="match status" value="1"/>
</dbReference>
<dbReference type="HAMAP" id="MF_00159">
    <property type="entry name" value="IspG"/>
    <property type="match status" value="1"/>
</dbReference>
<dbReference type="InterPro" id="IPR011005">
    <property type="entry name" value="Dihydropteroate_synth-like_sf"/>
</dbReference>
<dbReference type="InterPro" id="IPR036849">
    <property type="entry name" value="Enolase-like_C_sf"/>
</dbReference>
<dbReference type="InterPro" id="IPR016425">
    <property type="entry name" value="IspG_bac"/>
</dbReference>
<dbReference type="InterPro" id="IPR004588">
    <property type="entry name" value="IspG_bac-typ"/>
</dbReference>
<dbReference type="InterPro" id="IPR045854">
    <property type="entry name" value="NO2/SO3_Rdtase_4Fe4S_sf"/>
</dbReference>
<dbReference type="NCBIfam" id="TIGR00612">
    <property type="entry name" value="ispG_gcpE"/>
    <property type="match status" value="1"/>
</dbReference>
<dbReference type="NCBIfam" id="NF001540">
    <property type="entry name" value="PRK00366.1"/>
    <property type="match status" value="1"/>
</dbReference>
<dbReference type="PANTHER" id="PTHR30454">
    <property type="entry name" value="4-HYDROXY-3-METHYLBUT-2-EN-1-YL DIPHOSPHATE SYNTHASE"/>
    <property type="match status" value="1"/>
</dbReference>
<dbReference type="PANTHER" id="PTHR30454:SF0">
    <property type="entry name" value="4-HYDROXY-3-METHYLBUT-2-EN-1-YL DIPHOSPHATE SYNTHASE (FERREDOXIN), CHLOROPLASTIC"/>
    <property type="match status" value="1"/>
</dbReference>
<dbReference type="Pfam" id="PF04551">
    <property type="entry name" value="GcpE"/>
    <property type="match status" value="1"/>
</dbReference>
<dbReference type="PIRSF" id="PIRSF004640">
    <property type="entry name" value="IspG"/>
    <property type="match status" value="1"/>
</dbReference>
<dbReference type="SUPFAM" id="SSF51604">
    <property type="entry name" value="Enolase C-terminal domain-like"/>
    <property type="match status" value="1"/>
</dbReference>
<dbReference type="SUPFAM" id="SSF56014">
    <property type="entry name" value="Nitrite and sulphite reductase 4Fe-4S domain-like"/>
    <property type="match status" value="1"/>
</dbReference>
<proteinExistence type="inferred from homology"/>
<comment type="function">
    <text evidence="1">Converts 2C-methyl-D-erythritol 2,4-cyclodiphosphate (ME-2,4cPP) into 1-hydroxy-2-methyl-2-(E)-butenyl 4-diphosphate.</text>
</comment>
<comment type="catalytic activity">
    <reaction evidence="1">
        <text>(2E)-4-hydroxy-3-methylbut-2-enyl diphosphate + oxidized [flavodoxin] + H2O + 2 H(+) = 2-C-methyl-D-erythritol 2,4-cyclic diphosphate + reduced [flavodoxin]</text>
        <dbReference type="Rhea" id="RHEA:43604"/>
        <dbReference type="Rhea" id="RHEA-COMP:10622"/>
        <dbReference type="Rhea" id="RHEA-COMP:10623"/>
        <dbReference type="ChEBI" id="CHEBI:15377"/>
        <dbReference type="ChEBI" id="CHEBI:15378"/>
        <dbReference type="ChEBI" id="CHEBI:57618"/>
        <dbReference type="ChEBI" id="CHEBI:58210"/>
        <dbReference type="ChEBI" id="CHEBI:58483"/>
        <dbReference type="ChEBI" id="CHEBI:128753"/>
        <dbReference type="EC" id="1.17.7.3"/>
    </reaction>
</comment>
<comment type="cofactor">
    <cofactor evidence="1">
        <name>[4Fe-4S] cluster</name>
        <dbReference type="ChEBI" id="CHEBI:49883"/>
    </cofactor>
    <text evidence="1">Binds 1 [4Fe-4S] cluster.</text>
</comment>
<comment type="pathway">
    <text evidence="1">Isoprenoid biosynthesis; isopentenyl diphosphate biosynthesis via DXP pathway; isopentenyl diphosphate from 1-deoxy-D-xylulose 5-phosphate: step 5/6.</text>
</comment>
<comment type="similarity">
    <text evidence="1">Belongs to the IspG family.</text>
</comment>
<sequence length="370" mass="40282">MYNLSSIIRRKSTRIYVGKVPIGENAPISVQSMTNTKTTDVAATVAQIKALQSVGADIVRVSVPTMEAAEAFNQIKQQASVPLVADIHFDYRIALKVAEYGVDCLRINPGNIGSELRIRDVVASARHHGIPIRIGINGGSLEKDIQEKYKEPTPEALLESAMRQVSFLERLNFDQFKISVKASDVFLAIHSYRLLATRIDQPLHLGITEAGGARSGSIKSAIGLGILLSEGIGDTLRISLAADPTEEIKAGFDILKSLRIRSRGINFIACPTCSRQEFDVIGTVNALEKRLEDIVTPMDVSIIGCVVNGPGEALVSTLGVTGARNKSGFFEEGERKGRLDNQQIIDQLEAKIRAKAALLDKKNRIQINQL</sequence>
<evidence type="ECO:0000255" key="1">
    <source>
        <dbReference type="HAMAP-Rule" id="MF_00159"/>
    </source>
</evidence>
<accession>C4K4I8</accession>
<protein>
    <recommendedName>
        <fullName evidence="1">4-hydroxy-3-methylbut-2-en-1-yl diphosphate synthase (flavodoxin)</fullName>
        <ecNumber evidence="1">1.17.7.3</ecNumber>
    </recommendedName>
    <alternativeName>
        <fullName evidence="1">1-hydroxy-2-methyl-2-(E)-butenyl 4-diphosphate synthase</fullName>
    </alternativeName>
</protein>
<keyword id="KW-0004">4Fe-4S</keyword>
<keyword id="KW-0408">Iron</keyword>
<keyword id="KW-0411">Iron-sulfur</keyword>
<keyword id="KW-0414">Isoprene biosynthesis</keyword>
<keyword id="KW-0479">Metal-binding</keyword>
<keyword id="KW-0560">Oxidoreductase</keyword>